<feature type="chain" id="PRO_0000049376" description="WUSCHEL-related homeobox 9">
    <location>
        <begin position="1"/>
        <end position="378"/>
    </location>
</feature>
<feature type="DNA-binding region" description="Homeobox; WUS-type" evidence="1">
    <location>
        <begin position="51"/>
        <end position="115"/>
    </location>
</feature>
<feature type="region of interest" description="Disordered" evidence="2">
    <location>
        <begin position="1"/>
        <end position="60"/>
    </location>
</feature>
<feature type="region of interest" description="Disordered" evidence="2">
    <location>
        <begin position="123"/>
        <end position="173"/>
    </location>
</feature>
<feature type="compositionally biased region" description="Low complexity" evidence="2">
    <location>
        <begin position="32"/>
        <end position="42"/>
    </location>
</feature>
<feature type="compositionally biased region" description="Basic and acidic residues" evidence="2">
    <location>
        <begin position="45"/>
        <end position="54"/>
    </location>
</feature>
<feature type="compositionally biased region" description="Low complexity" evidence="2">
    <location>
        <begin position="137"/>
        <end position="152"/>
    </location>
</feature>
<feature type="compositionally biased region" description="Low complexity" evidence="2">
    <location>
        <begin position="161"/>
        <end position="171"/>
    </location>
</feature>
<accession>Q6X7J4</accession>
<accession>O23662</accession>
<accession>Q8GX13</accession>
<protein>
    <recommendedName>
        <fullName evidence="9">WUSCHEL-related homeobox 9</fullName>
    </recommendedName>
    <alternativeName>
        <fullName evidence="10">Protein STIMPY</fullName>
    </alternativeName>
</protein>
<dbReference type="EMBL" id="AY251401">
    <property type="protein sequence ID" value="AAP37139.1"/>
    <property type="molecule type" value="mRNA"/>
</dbReference>
<dbReference type="EMBL" id="U78721">
    <property type="protein sequence ID" value="AAC69146.1"/>
    <property type="status" value="ALT_SEQ"/>
    <property type="molecule type" value="Genomic_DNA"/>
</dbReference>
<dbReference type="EMBL" id="CP002685">
    <property type="protein sequence ID" value="AEC08902.1"/>
    <property type="molecule type" value="Genomic_DNA"/>
</dbReference>
<dbReference type="EMBL" id="AK118501">
    <property type="protein sequence ID" value="BAC43105.1"/>
    <property type="status" value="ALT_SEQ"/>
    <property type="molecule type" value="mRNA"/>
</dbReference>
<dbReference type="EMBL" id="BT005296">
    <property type="protein sequence ID" value="AAO63360.1"/>
    <property type="molecule type" value="mRNA"/>
</dbReference>
<dbReference type="PIR" id="G84750">
    <property type="entry name" value="G84750"/>
</dbReference>
<dbReference type="RefSeq" id="NP_180944.2">
    <property type="nucleotide sequence ID" value="NM_128948.4"/>
</dbReference>
<dbReference type="SMR" id="Q6X7J4"/>
<dbReference type="BioGRID" id="3305">
    <property type="interactions" value="11"/>
</dbReference>
<dbReference type="FunCoup" id="Q6X7J4">
    <property type="interactions" value="287"/>
</dbReference>
<dbReference type="IntAct" id="Q6X7J4">
    <property type="interactions" value="13"/>
</dbReference>
<dbReference type="STRING" id="3702.Q6X7J4"/>
<dbReference type="PaxDb" id="3702-AT2G33880.1"/>
<dbReference type="EnsemblPlants" id="AT2G33880.1">
    <property type="protein sequence ID" value="AT2G33880.1"/>
    <property type="gene ID" value="AT2G33880"/>
</dbReference>
<dbReference type="GeneID" id="817958"/>
<dbReference type="Gramene" id="AT2G33880.1">
    <property type="protein sequence ID" value="AT2G33880.1"/>
    <property type="gene ID" value="AT2G33880"/>
</dbReference>
<dbReference type="KEGG" id="ath:AT2G33880"/>
<dbReference type="Araport" id="AT2G33880"/>
<dbReference type="TAIR" id="AT2G33880">
    <property type="gene designation" value="HB-3"/>
</dbReference>
<dbReference type="eggNOG" id="ENOG502QVSY">
    <property type="taxonomic scope" value="Eukaryota"/>
</dbReference>
<dbReference type="HOGENOM" id="CLU_030463_1_0_1"/>
<dbReference type="InParanoid" id="Q6X7J4"/>
<dbReference type="OrthoDB" id="1935198at2759"/>
<dbReference type="PhylomeDB" id="Q6X7J4"/>
<dbReference type="PRO" id="PR:Q6X7J4"/>
<dbReference type="Proteomes" id="UP000006548">
    <property type="component" value="Chromosome 2"/>
</dbReference>
<dbReference type="ExpressionAtlas" id="Q6X7J4">
    <property type="expression patterns" value="baseline and differential"/>
</dbReference>
<dbReference type="GO" id="GO:0005737">
    <property type="term" value="C:cytoplasm"/>
    <property type="evidence" value="ECO:0000314"/>
    <property type="project" value="TAIR"/>
</dbReference>
<dbReference type="GO" id="GO:0005634">
    <property type="term" value="C:nucleus"/>
    <property type="evidence" value="ECO:0000314"/>
    <property type="project" value="TAIR"/>
</dbReference>
<dbReference type="GO" id="GO:0003700">
    <property type="term" value="F:DNA-binding transcription factor activity"/>
    <property type="evidence" value="ECO:0000250"/>
    <property type="project" value="TAIR"/>
</dbReference>
<dbReference type="GO" id="GO:0000976">
    <property type="term" value="F:transcription cis-regulatory region binding"/>
    <property type="evidence" value="ECO:0000353"/>
    <property type="project" value="TAIR"/>
</dbReference>
<dbReference type="GO" id="GO:0009793">
    <property type="term" value="P:embryo development ending in seed dormancy"/>
    <property type="evidence" value="ECO:0000315"/>
    <property type="project" value="TAIR"/>
</dbReference>
<dbReference type="GO" id="GO:0008284">
    <property type="term" value="P:positive regulation of cell population proliferation"/>
    <property type="evidence" value="ECO:0000315"/>
    <property type="project" value="TAIR"/>
</dbReference>
<dbReference type="GO" id="GO:0010075">
    <property type="term" value="P:regulation of meristem growth"/>
    <property type="evidence" value="ECO:0000315"/>
    <property type="project" value="TAIR"/>
</dbReference>
<dbReference type="CDD" id="cd00086">
    <property type="entry name" value="homeodomain"/>
    <property type="match status" value="1"/>
</dbReference>
<dbReference type="FunFam" id="1.10.10.60:FF:000118">
    <property type="entry name" value="WUSCHEL-related homeobox 11"/>
    <property type="match status" value="1"/>
</dbReference>
<dbReference type="Gene3D" id="1.10.10.60">
    <property type="entry name" value="Homeodomain-like"/>
    <property type="match status" value="1"/>
</dbReference>
<dbReference type="InterPro" id="IPR001356">
    <property type="entry name" value="HD"/>
</dbReference>
<dbReference type="InterPro" id="IPR009057">
    <property type="entry name" value="Homeodomain-like_sf"/>
</dbReference>
<dbReference type="InterPro" id="IPR044557">
    <property type="entry name" value="WOX8/9-like"/>
</dbReference>
<dbReference type="PANTHER" id="PTHR47288">
    <property type="entry name" value="WUSCHEL-RELATED HOMEOBOX 9"/>
    <property type="match status" value="1"/>
</dbReference>
<dbReference type="PANTHER" id="PTHR47288:SF1">
    <property type="entry name" value="WUSCHEL-RELATED HOMEOBOX 9"/>
    <property type="match status" value="1"/>
</dbReference>
<dbReference type="Pfam" id="PF00046">
    <property type="entry name" value="Homeodomain"/>
    <property type="match status" value="1"/>
</dbReference>
<dbReference type="SMART" id="SM00389">
    <property type="entry name" value="HOX"/>
    <property type="match status" value="1"/>
</dbReference>
<dbReference type="SUPFAM" id="SSF46689">
    <property type="entry name" value="Homeodomain-like"/>
    <property type="match status" value="1"/>
</dbReference>
<dbReference type="PROSITE" id="PS50071">
    <property type="entry name" value="HOMEOBOX_2"/>
    <property type="match status" value="1"/>
</dbReference>
<organism>
    <name type="scientific">Arabidopsis thaliana</name>
    <name type="common">Mouse-ear cress</name>
    <dbReference type="NCBI Taxonomy" id="3702"/>
    <lineage>
        <taxon>Eukaryota</taxon>
        <taxon>Viridiplantae</taxon>
        <taxon>Streptophyta</taxon>
        <taxon>Embryophyta</taxon>
        <taxon>Tracheophyta</taxon>
        <taxon>Spermatophyta</taxon>
        <taxon>Magnoliopsida</taxon>
        <taxon>eudicotyledons</taxon>
        <taxon>Gunneridae</taxon>
        <taxon>Pentapetalae</taxon>
        <taxon>rosids</taxon>
        <taxon>malvids</taxon>
        <taxon>Brassicales</taxon>
        <taxon>Brassicaceae</taxon>
        <taxon>Camelineae</taxon>
        <taxon>Arabidopsis</taxon>
    </lineage>
</organism>
<evidence type="ECO:0000255" key="1">
    <source>
        <dbReference type="PROSITE-ProRule" id="PRU00108"/>
    </source>
</evidence>
<evidence type="ECO:0000256" key="2">
    <source>
        <dbReference type="SAM" id="MobiDB-lite"/>
    </source>
</evidence>
<evidence type="ECO:0000269" key="3">
    <source>
    </source>
</evidence>
<evidence type="ECO:0000269" key="4">
    <source>
    </source>
</evidence>
<evidence type="ECO:0000269" key="5">
    <source>
    </source>
</evidence>
<evidence type="ECO:0000269" key="6">
    <source>
    </source>
</evidence>
<evidence type="ECO:0000269" key="7">
    <source>
    </source>
</evidence>
<evidence type="ECO:0000269" key="8">
    <source>
    </source>
</evidence>
<evidence type="ECO:0000303" key="9">
    <source>
    </source>
</evidence>
<evidence type="ECO:0000303" key="10">
    <source>
    </source>
</evidence>
<evidence type="ECO:0000303" key="11">
    <source>
    </source>
</evidence>
<evidence type="ECO:0000303" key="12">
    <source>
    </source>
</evidence>
<evidence type="ECO:0000305" key="13"/>
<evidence type="ECO:0000312" key="14">
    <source>
        <dbReference type="Araport" id="AT2G33880"/>
    </source>
</evidence>
<evidence type="ECO:0000312" key="15">
    <source>
        <dbReference type="EMBL" id="AAC69146.1"/>
    </source>
</evidence>
<sequence length="378" mass="42089">MASSNRHWPSMFKSKPHPHQWQHDINSPLLPSASHRSSPFSSGCEVERSPEPKPRWNPKPEQIRILEAIFNSGMVNPPREEIRRIRAQLQEYGQVGDANVFYWFQNRKSRSKHKLRLLHNHSKHSLPQTQPQPQPQPSASSSSSSSSSSSKSTKPRKSKNKNNTNLSLGGSQMMGMFPPEPAFLFPVSTVGGFEGITVSSQLGFLSGDMIEQQKPAPTCTGLLLSEIMNGSVSYGTHHQQHLSEKEVEEMRMKMLQQPQTQICYATTNHQIASYNNNNNNNNIMLHIPPTTSTATTITTSHSLATVPSTSDQLQVQADARIRVFINEMELEVSSGPFNVRDAFGEEVVLINSAGQPIVTDEYGVALHPLQHGASYYLI</sequence>
<proteinExistence type="evidence at transcript level"/>
<comment type="function">
    <text evidence="4 5 6 7 12">Homeodomain transcription factor required for meristem growth and early development (PubMed:15753038). Promotes cell proliferation and prevents premature differentiation in meristematic tissues during postembryonic development (PubMed:15753038). Essential for maintaining tissue growth during embryogenesis (PubMed:17706632). May act by repressing TSS to promote meristematic proliferation (PubMed:21185286). Involved in the transcriptional activation of a subset of cytokinin response factors (PubMed:20110319). May act as a negative regulator of cytokinin signaling in the dark (PubMed:21057190).</text>
</comment>
<comment type="subcellular location">
    <subcellularLocation>
        <location evidence="5">Nucleus</location>
    </subcellularLocation>
    <subcellularLocation>
        <location evidence="5">Cytoplasm</location>
    </subcellularLocation>
</comment>
<comment type="tissue specificity">
    <text evidence="3 4 6">Expressed in the basal cell and later at the boundary between suspensor and proembryo (PubMed:14711878). Expressed at low levels in proliferating tissues post embryonically (PubMed:15753038). Detected in vegetative shoot apical meristem, leaf primordia, floral meristems, emerging floral organs, epidermal layer of the placenta and in the upper portion of the root meristematic zone (PubMed:15753038, PubMed:20110319).</text>
</comment>
<comment type="developmental stage">
    <text evidence="3 5">First detected in the basal daughter cell of the zygote (PubMed:14711878). Unlike WOX2 and WOX8, it is not expressed in the egg cell or the zygote (PubMed:14711878). During two subsequent rounds of transverse cell divisions, it is restricted to the hypophysis (PubMed:14711878). At the 8-cell stage, it expands into the central domain of the embryo, in addition to weakening in the hypophysis (PubMed:14711878). After protoderm formation, expression in the central embryo domain is restricted to the protodermal cells and also disappears from the hypophyseal cell (PubMed:14711878). In subsequent stages, a ring of expression remains at the presumptive boundary between root and hypocotyl, at about the same position as WOX2 expression in heart stage embryos (PubMed:14711878). In addition to its embryonic expression, it is expressed postembryonically in the epidermal cells of the placenta during gynoecium development, but not in the developing ovules (PubMed:14711878). The placental expression disappears soon after fertilization (PubMed:14711878). Expression dynamics require MP and BDL, but not GN activity (PubMed:14711878). Detected as early as the first zygotic division in both the apical and the basal daughter cells (PubMed:17706632). By late globular to early transition stage, the protein is evenly distributed through out the embryo and the suspensor (PubMed:17706632). The basal half of the embryo, especially cells in the protoderm layer, starts to show slightly higher levels of expression by early heart stage (PubMed:17706632).</text>
</comment>
<comment type="induction">
    <text evidence="8">Up-regulated in the zygote after fertilization by the transcription factor WRKY2.</text>
</comment>
<comment type="disruption phenotype">
    <text evidence="4 5">Embryonic lethality when homozygous (PubMed:17706632). Reduction in embryonic growth, failure in axillary shoot apical meristem and leaf-primordia initiation and growth, and failure in primary root growth and lateral root initiation when heterozygous (PubMed:15753038, PubMed:17706632). Wox8 and wox9 double mutants are embryo lethal, with embryos disrupted as early as the first cell division in the embryo proper (PubMed:17706632).</text>
</comment>
<comment type="miscellaneous">
    <text evidence="11 12">The seedling growth arrest phenotype of the stip mutants likely resulted from a G2 cell cycle arrest of the meristematic tissue (PubMed:17706632). Exogenous sucrose in the growth medium reactivate the stip meristems by repressing TSS and activating the expression of cell cycle regulators, and thus promoting G2 to M transition in meristematic tissues (PubMed:21185286).</text>
</comment>
<comment type="similarity">
    <text evidence="13">Belongs to the WUS homeobox family.</text>
</comment>
<comment type="sequence caution" evidence="13">
    <conflict type="erroneous gene model prediction">
        <sequence resource="EMBL-CDS" id="AAC69146"/>
    </conflict>
</comment>
<comment type="sequence caution" evidence="13">
    <conflict type="erroneous termination">
        <sequence resource="EMBL-CDS" id="BAC43105"/>
    </conflict>
    <text>Truncated C-terminus.</text>
</comment>
<keyword id="KW-0963">Cytoplasm</keyword>
<keyword id="KW-0217">Developmental protein</keyword>
<keyword id="KW-0238">DNA-binding</keyword>
<keyword id="KW-0371">Homeobox</keyword>
<keyword id="KW-0539">Nucleus</keyword>
<keyword id="KW-1185">Reference proteome</keyword>
<keyword id="KW-0804">Transcription</keyword>
<keyword id="KW-0805">Transcription regulation</keyword>
<gene>
    <name evidence="9" type="primary">WOX9</name>
    <name evidence="10" type="synonym">STIP</name>
    <name evidence="14" type="ordered locus">At2g33880</name>
    <name evidence="15" type="ORF">T1B8.31</name>
</gene>
<name>WOX9_ARATH</name>
<reference key="1">
    <citation type="journal article" date="2004" name="Development">
        <title>Expression dynamics of WOX genes mark cell fate decisions during early embryonic patterning in Arabidopsis thaliana.</title>
        <authorList>
            <person name="Haecker A."/>
            <person name="Gross-Hardt R."/>
            <person name="Geiges B."/>
            <person name="Sarkar A."/>
            <person name="Breuninger H."/>
            <person name="Herrmann M."/>
            <person name="Laux T."/>
        </authorList>
    </citation>
    <scope>NUCLEOTIDE SEQUENCE [MRNA]</scope>
    <scope>DEVELOPMENTAL STAGE</scope>
    <scope>TISSUE SPECIFICITY</scope>
    <source>
        <strain>cv. Landsberg erecta</strain>
    </source>
</reference>
<reference key="2">
    <citation type="journal article" date="1999" name="Nature">
        <title>Sequence and analysis of chromosome 2 of the plant Arabidopsis thaliana.</title>
        <authorList>
            <person name="Lin X."/>
            <person name="Kaul S."/>
            <person name="Rounsley S.D."/>
            <person name="Shea T.P."/>
            <person name="Benito M.-I."/>
            <person name="Town C.D."/>
            <person name="Fujii C.Y."/>
            <person name="Mason T.M."/>
            <person name="Bowman C.L."/>
            <person name="Barnstead M.E."/>
            <person name="Feldblyum T.V."/>
            <person name="Buell C.R."/>
            <person name="Ketchum K.A."/>
            <person name="Lee J.J."/>
            <person name="Ronning C.M."/>
            <person name="Koo H.L."/>
            <person name="Moffat K.S."/>
            <person name="Cronin L.A."/>
            <person name="Shen M."/>
            <person name="Pai G."/>
            <person name="Van Aken S."/>
            <person name="Umayam L."/>
            <person name="Tallon L.J."/>
            <person name="Gill J.E."/>
            <person name="Adams M.D."/>
            <person name="Carrera A.J."/>
            <person name="Creasy T.H."/>
            <person name="Goodman H.M."/>
            <person name="Somerville C.R."/>
            <person name="Copenhaver G.P."/>
            <person name="Preuss D."/>
            <person name="Nierman W.C."/>
            <person name="White O."/>
            <person name="Eisen J.A."/>
            <person name="Salzberg S.L."/>
            <person name="Fraser C.M."/>
            <person name="Venter J.C."/>
        </authorList>
    </citation>
    <scope>NUCLEOTIDE SEQUENCE [LARGE SCALE GENOMIC DNA]</scope>
    <source>
        <strain>cv. Columbia</strain>
    </source>
</reference>
<reference key="3">
    <citation type="journal article" date="2017" name="Plant J.">
        <title>Araport11: a complete reannotation of the Arabidopsis thaliana reference genome.</title>
        <authorList>
            <person name="Cheng C.Y."/>
            <person name="Krishnakumar V."/>
            <person name="Chan A.P."/>
            <person name="Thibaud-Nissen F."/>
            <person name="Schobel S."/>
            <person name="Town C.D."/>
        </authorList>
    </citation>
    <scope>GENOME REANNOTATION</scope>
    <source>
        <strain>cv. Columbia</strain>
    </source>
</reference>
<reference key="4">
    <citation type="journal article" date="2002" name="Science">
        <title>Functional annotation of a full-length Arabidopsis cDNA collection.</title>
        <authorList>
            <person name="Seki M."/>
            <person name="Narusaka M."/>
            <person name="Kamiya A."/>
            <person name="Ishida J."/>
            <person name="Satou M."/>
            <person name="Sakurai T."/>
            <person name="Nakajima M."/>
            <person name="Enju A."/>
            <person name="Akiyama K."/>
            <person name="Oono Y."/>
            <person name="Muramatsu M."/>
            <person name="Hayashizaki Y."/>
            <person name="Kawai J."/>
            <person name="Carninci P."/>
            <person name="Itoh M."/>
            <person name="Ishii Y."/>
            <person name="Arakawa T."/>
            <person name="Shibata K."/>
            <person name="Shinagawa A."/>
            <person name="Shinozaki K."/>
        </authorList>
    </citation>
    <scope>NUCLEOTIDE SEQUENCE [LARGE SCALE MRNA]</scope>
    <source>
        <strain>cv. Columbia</strain>
    </source>
</reference>
<reference key="5">
    <citation type="journal article" date="2003" name="Science">
        <title>Empirical analysis of transcriptional activity in the Arabidopsis genome.</title>
        <authorList>
            <person name="Yamada K."/>
            <person name="Lim J."/>
            <person name="Dale J.M."/>
            <person name="Chen H."/>
            <person name="Shinn P."/>
            <person name="Palm C.J."/>
            <person name="Southwick A.M."/>
            <person name="Wu H.C."/>
            <person name="Kim C.J."/>
            <person name="Nguyen M."/>
            <person name="Pham P.K."/>
            <person name="Cheuk R.F."/>
            <person name="Karlin-Newmann G."/>
            <person name="Liu S.X."/>
            <person name="Lam B."/>
            <person name="Sakano H."/>
            <person name="Wu T."/>
            <person name="Yu G."/>
            <person name="Miranda M."/>
            <person name="Quach H.L."/>
            <person name="Tripp M."/>
            <person name="Chang C.H."/>
            <person name="Lee J.M."/>
            <person name="Toriumi M.J."/>
            <person name="Chan M.M."/>
            <person name="Tang C.C."/>
            <person name="Onodera C.S."/>
            <person name="Deng J.M."/>
            <person name="Akiyama K."/>
            <person name="Ansari Y."/>
            <person name="Arakawa T."/>
            <person name="Banh J."/>
            <person name="Banno F."/>
            <person name="Bowser L."/>
            <person name="Brooks S.Y."/>
            <person name="Carninci P."/>
            <person name="Chao Q."/>
            <person name="Choy N."/>
            <person name="Enju A."/>
            <person name="Goldsmith A.D."/>
            <person name="Gurjal M."/>
            <person name="Hansen N.F."/>
            <person name="Hayashizaki Y."/>
            <person name="Johnson-Hopson C."/>
            <person name="Hsuan V.W."/>
            <person name="Iida K."/>
            <person name="Karnes M."/>
            <person name="Khan S."/>
            <person name="Koesema E."/>
            <person name="Ishida J."/>
            <person name="Jiang P.X."/>
            <person name="Jones T."/>
            <person name="Kawai J."/>
            <person name="Kamiya A."/>
            <person name="Meyers C."/>
            <person name="Nakajima M."/>
            <person name="Narusaka M."/>
            <person name="Seki M."/>
            <person name="Sakurai T."/>
            <person name="Satou M."/>
            <person name="Tamse R."/>
            <person name="Vaysberg M."/>
            <person name="Wallender E.K."/>
            <person name="Wong C."/>
            <person name="Yamamura Y."/>
            <person name="Yuan S."/>
            <person name="Shinozaki K."/>
            <person name="Davis R.W."/>
            <person name="Theologis A."/>
            <person name="Ecker J.R."/>
        </authorList>
    </citation>
    <scope>NUCLEOTIDE SEQUENCE [LARGE SCALE MRNA] OF 74-378</scope>
    <source>
        <strain>cv. Columbia</strain>
    </source>
</reference>
<reference key="6">
    <citation type="journal article" date="2005" name="Curr. Biol.">
        <title>Requirement of homeobox gene STIMPY/WOX9 for Arabidopsis meristem growth and maintenance.</title>
        <authorList>
            <person name="Wu X."/>
            <person name="Dabi T."/>
            <person name="Weigel D."/>
        </authorList>
    </citation>
    <scope>FUNCTION</scope>
    <scope>TISSUE SPECIFICITY</scope>
    <scope>DISRUPTION PHENOTYPE</scope>
</reference>
<reference key="7">
    <citation type="journal article" date="2007" name="Dev. Biol.">
        <title>Combinations of WOX activities regulate tissue proliferation during Arabidopsis embryonic development.</title>
        <authorList>
            <person name="Wu X."/>
            <person name="Chory J."/>
            <person name="Weigel D."/>
        </authorList>
    </citation>
    <scope>FUNCTION</scope>
    <scope>DEVELOPMENTAL STAGE</scope>
    <scope>SUBCELLULAR LOCATION</scope>
    <scope>DISRUPTION PHENOTYPE</scope>
</reference>
<reference key="8">
    <citation type="journal article" date="2010" name="Development">
        <title>STIMPY mediates cytokinin signaling during shoot meristem establishment in Arabidopsis seedlings.</title>
        <authorList>
            <person name="Skylar A."/>
            <person name="Hong F."/>
            <person name="Chory J."/>
            <person name="Weigel D."/>
            <person name="Wu X."/>
        </authorList>
    </citation>
    <scope>FUNCTION</scope>
    <scope>TISSUE SPECIFICITY</scope>
</reference>
<reference key="9">
    <citation type="journal article" date="2010" name="Plant Signal. Behav.">
        <title>STIMPY mutants have increased cytokinin sensitivity during dark germination.</title>
        <authorList>
            <person name="Skylar A."/>
            <person name="Wu X."/>
        </authorList>
    </citation>
    <scope>FUNCTION</scope>
</reference>
<reference key="10">
    <citation type="journal article" date="2011" name="Dev. Biol.">
        <title>Metabolic sugar signal promotes Arabidopsis meristematic proliferation via G2.</title>
        <authorList>
            <person name="Skylar A."/>
            <person name="Sung F."/>
            <person name="Hong F."/>
            <person name="Chory J."/>
            <person name="Wu X."/>
        </authorList>
    </citation>
    <scope>FUNCTION</scope>
</reference>
<reference key="11">
    <citation type="journal article" date="2011" name="Dev. Cell">
        <title>Transcriptional activation of Arabidopsis axis patterning genes WOX8/9 links zygote polarity to embryo development.</title>
        <authorList>
            <person name="Ueda M."/>
            <person name="Zhang Z."/>
            <person name="Laux T."/>
        </authorList>
    </citation>
    <scope>INDUCTION BY WRKY2</scope>
</reference>